<accession>Q8NIL4</accession>
<protein>
    <recommendedName>
        <fullName>Uncharacterized protein PB21E7.05</fullName>
    </recommendedName>
</protein>
<keyword id="KW-1185">Reference proteome</keyword>
<gene>
    <name type="ORF">SPBPB21E7.05</name>
</gene>
<feature type="chain" id="PRO_0000304059" description="Uncharacterized protein PB21E7.05">
    <location>
        <begin position="1"/>
        <end position="127"/>
    </location>
</feature>
<reference key="1">
    <citation type="journal article" date="2002" name="Nature">
        <title>The genome sequence of Schizosaccharomyces pombe.</title>
        <authorList>
            <person name="Wood V."/>
            <person name="Gwilliam R."/>
            <person name="Rajandream M.A."/>
            <person name="Lyne M.H."/>
            <person name="Lyne R."/>
            <person name="Stewart A."/>
            <person name="Sgouros J.G."/>
            <person name="Peat N."/>
            <person name="Hayles J."/>
            <person name="Baker S.G."/>
            <person name="Basham D."/>
            <person name="Bowman S."/>
            <person name="Brooks K."/>
            <person name="Brown D."/>
            <person name="Brown S."/>
            <person name="Chillingworth T."/>
            <person name="Churcher C.M."/>
            <person name="Collins M."/>
            <person name="Connor R."/>
            <person name="Cronin A."/>
            <person name="Davis P."/>
            <person name="Feltwell T."/>
            <person name="Fraser A."/>
            <person name="Gentles S."/>
            <person name="Goble A."/>
            <person name="Hamlin N."/>
            <person name="Harris D.E."/>
            <person name="Hidalgo J."/>
            <person name="Hodgson G."/>
            <person name="Holroyd S."/>
            <person name="Hornsby T."/>
            <person name="Howarth S."/>
            <person name="Huckle E.J."/>
            <person name="Hunt S."/>
            <person name="Jagels K."/>
            <person name="James K.D."/>
            <person name="Jones L."/>
            <person name="Jones M."/>
            <person name="Leather S."/>
            <person name="McDonald S."/>
            <person name="McLean J."/>
            <person name="Mooney P."/>
            <person name="Moule S."/>
            <person name="Mungall K.L."/>
            <person name="Murphy L.D."/>
            <person name="Niblett D."/>
            <person name="Odell C."/>
            <person name="Oliver K."/>
            <person name="O'Neil S."/>
            <person name="Pearson D."/>
            <person name="Quail M.A."/>
            <person name="Rabbinowitsch E."/>
            <person name="Rutherford K.M."/>
            <person name="Rutter S."/>
            <person name="Saunders D."/>
            <person name="Seeger K."/>
            <person name="Sharp S."/>
            <person name="Skelton J."/>
            <person name="Simmonds M.N."/>
            <person name="Squares R."/>
            <person name="Squares S."/>
            <person name="Stevens K."/>
            <person name="Taylor K."/>
            <person name="Taylor R.G."/>
            <person name="Tivey A."/>
            <person name="Walsh S.V."/>
            <person name="Warren T."/>
            <person name="Whitehead S."/>
            <person name="Woodward J.R."/>
            <person name="Volckaert G."/>
            <person name="Aert R."/>
            <person name="Robben J."/>
            <person name="Grymonprez B."/>
            <person name="Weltjens I."/>
            <person name="Vanstreels E."/>
            <person name="Rieger M."/>
            <person name="Schaefer M."/>
            <person name="Mueller-Auer S."/>
            <person name="Gabel C."/>
            <person name="Fuchs M."/>
            <person name="Duesterhoeft A."/>
            <person name="Fritzc C."/>
            <person name="Holzer E."/>
            <person name="Moestl D."/>
            <person name="Hilbert H."/>
            <person name="Borzym K."/>
            <person name="Langer I."/>
            <person name="Beck A."/>
            <person name="Lehrach H."/>
            <person name="Reinhardt R."/>
            <person name="Pohl T.M."/>
            <person name="Eger P."/>
            <person name="Zimmermann W."/>
            <person name="Wedler H."/>
            <person name="Wambutt R."/>
            <person name="Purnelle B."/>
            <person name="Goffeau A."/>
            <person name="Cadieu E."/>
            <person name="Dreano S."/>
            <person name="Gloux S."/>
            <person name="Lelaure V."/>
            <person name="Mottier S."/>
            <person name="Galibert F."/>
            <person name="Aves S.J."/>
            <person name="Xiang Z."/>
            <person name="Hunt C."/>
            <person name="Moore K."/>
            <person name="Hurst S.M."/>
            <person name="Lucas M."/>
            <person name="Rochet M."/>
            <person name="Gaillardin C."/>
            <person name="Tallada V.A."/>
            <person name="Garzon A."/>
            <person name="Thode G."/>
            <person name="Daga R.R."/>
            <person name="Cruzado L."/>
            <person name="Jimenez J."/>
            <person name="Sanchez M."/>
            <person name="del Rey F."/>
            <person name="Benito J."/>
            <person name="Dominguez A."/>
            <person name="Revuelta J.L."/>
            <person name="Moreno S."/>
            <person name="Armstrong J."/>
            <person name="Forsburg S.L."/>
            <person name="Cerutti L."/>
            <person name="Lowe T."/>
            <person name="McCombie W.R."/>
            <person name="Paulsen I."/>
            <person name="Potashkin J."/>
            <person name="Shpakovski G.V."/>
            <person name="Ussery D."/>
            <person name="Barrell B.G."/>
            <person name="Nurse P."/>
        </authorList>
    </citation>
    <scope>NUCLEOTIDE SEQUENCE [LARGE SCALE GENOMIC DNA]</scope>
    <source>
        <strain>972 / ATCC 24843</strain>
    </source>
</reference>
<sequence>MVKKFQSKLINLQFNIILTFFVYEWNHDITCLNFKVKKRRGDFYVINERFFIKYIIKKNKNPQNLTKSICNSKTSINSMRQYLATINKKLRAFVQTFLAIGGYYSITTQIVKIILITHPVLLCQCSS</sequence>
<proteinExistence type="predicted"/>
<name>YP35_SCHPO</name>
<organism>
    <name type="scientific">Schizosaccharomyces pombe (strain 972 / ATCC 24843)</name>
    <name type="common">Fission yeast</name>
    <dbReference type="NCBI Taxonomy" id="284812"/>
    <lineage>
        <taxon>Eukaryota</taxon>
        <taxon>Fungi</taxon>
        <taxon>Dikarya</taxon>
        <taxon>Ascomycota</taxon>
        <taxon>Taphrinomycotina</taxon>
        <taxon>Schizosaccharomycetes</taxon>
        <taxon>Schizosaccharomycetales</taxon>
        <taxon>Schizosaccharomycetaceae</taxon>
        <taxon>Schizosaccharomyces</taxon>
    </lineage>
</organism>
<dbReference type="EMBL" id="CU329671">
    <property type="protein sequence ID" value="CAD31745.1"/>
    <property type="molecule type" value="Genomic_DNA"/>
</dbReference>
<dbReference type="RefSeq" id="NP_001018771.1">
    <property type="nucleotide sequence ID" value="NM_001020946.1"/>
</dbReference>
<dbReference type="SMR" id="Q8NIL4"/>
<dbReference type="BioGRID" id="280255">
    <property type="interactions" value="1"/>
</dbReference>
<dbReference type="SwissPalm" id="Q8NIL4"/>
<dbReference type="PaxDb" id="4896-SPBPB21E7.05.1"/>
<dbReference type="EnsemblFungi" id="SPBPB21E7.05.1">
    <property type="protein sequence ID" value="SPBPB21E7.05.1:pep"/>
    <property type="gene ID" value="SPBPB21E7.05"/>
</dbReference>
<dbReference type="KEGG" id="spo:3361179"/>
<dbReference type="PomBase" id="SPBPB21E7.05"/>
<dbReference type="VEuPathDB" id="FungiDB:SPBPB21E7.05"/>
<dbReference type="HOGENOM" id="CLU_1971790_0_0_1"/>
<dbReference type="InParanoid" id="Q8NIL4"/>
<dbReference type="PRO" id="PR:Q8NIL4"/>
<dbReference type="Proteomes" id="UP000002485">
    <property type="component" value="Chromosome II"/>
</dbReference>